<protein>
    <recommendedName>
        <fullName evidence="1">Bifunctional purine biosynthesis protein PurH</fullName>
    </recommendedName>
    <domain>
        <recommendedName>
            <fullName evidence="1">Phosphoribosylaminoimidazolecarboxamide formyltransferase</fullName>
            <ecNumber evidence="1">2.1.2.3</ecNumber>
        </recommendedName>
        <alternativeName>
            <fullName evidence="1">AICAR transformylase</fullName>
        </alternativeName>
    </domain>
    <domain>
        <recommendedName>
            <fullName evidence="1">IMP cyclohydrolase</fullName>
            <ecNumber evidence="1">3.5.4.10</ecNumber>
        </recommendedName>
        <alternativeName>
            <fullName evidence="1">ATIC</fullName>
        </alternativeName>
        <alternativeName>
            <fullName evidence="1">IMP synthase</fullName>
        </alternativeName>
        <alternativeName>
            <fullName evidence="1">Inosinicase</fullName>
        </alternativeName>
    </domain>
</protein>
<gene>
    <name evidence="1" type="primary">purH</name>
    <name type="ordered locus">Vapar_4630</name>
</gene>
<comment type="catalytic activity">
    <reaction evidence="1">
        <text>(6R)-10-formyltetrahydrofolate + 5-amino-1-(5-phospho-beta-D-ribosyl)imidazole-4-carboxamide = 5-formamido-1-(5-phospho-D-ribosyl)imidazole-4-carboxamide + (6S)-5,6,7,8-tetrahydrofolate</text>
        <dbReference type="Rhea" id="RHEA:22192"/>
        <dbReference type="ChEBI" id="CHEBI:57453"/>
        <dbReference type="ChEBI" id="CHEBI:58467"/>
        <dbReference type="ChEBI" id="CHEBI:58475"/>
        <dbReference type="ChEBI" id="CHEBI:195366"/>
        <dbReference type="EC" id="2.1.2.3"/>
    </reaction>
</comment>
<comment type="catalytic activity">
    <reaction evidence="1">
        <text>IMP + H2O = 5-formamido-1-(5-phospho-D-ribosyl)imidazole-4-carboxamide</text>
        <dbReference type="Rhea" id="RHEA:18445"/>
        <dbReference type="ChEBI" id="CHEBI:15377"/>
        <dbReference type="ChEBI" id="CHEBI:58053"/>
        <dbReference type="ChEBI" id="CHEBI:58467"/>
        <dbReference type="EC" id="3.5.4.10"/>
    </reaction>
</comment>
<comment type="pathway">
    <text evidence="1">Purine metabolism; IMP biosynthesis via de novo pathway; 5-formamido-1-(5-phospho-D-ribosyl)imidazole-4-carboxamide from 5-amino-1-(5-phospho-D-ribosyl)imidazole-4-carboxamide (10-formyl THF route): step 1/1.</text>
</comment>
<comment type="pathway">
    <text evidence="1">Purine metabolism; IMP biosynthesis via de novo pathway; IMP from 5-formamido-1-(5-phospho-D-ribosyl)imidazole-4-carboxamide: step 1/1.</text>
</comment>
<comment type="domain">
    <text evidence="1">The IMP cyclohydrolase activity resides in the N-terminal region.</text>
</comment>
<comment type="similarity">
    <text evidence="1">Belongs to the PurH family.</text>
</comment>
<organism>
    <name type="scientific">Variovorax paradoxus (strain S110)</name>
    <dbReference type="NCBI Taxonomy" id="543728"/>
    <lineage>
        <taxon>Bacteria</taxon>
        <taxon>Pseudomonadati</taxon>
        <taxon>Pseudomonadota</taxon>
        <taxon>Betaproteobacteria</taxon>
        <taxon>Burkholderiales</taxon>
        <taxon>Comamonadaceae</taxon>
        <taxon>Variovorax</taxon>
    </lineage>
</organism>
<feature type="chain" id="PRO_1000203256" description="Bifunctional purine biosynthesis protein PurH">
    <location>
        <begin position="1"/>
        <end position="535"/>
    </location>
</feature>
<feature type="domain" description="MGS-like" evidence="2">
    <location>
        <begin position="1"/>
        <end position="145"/>
    </location>
</feature>
<evidence type="ECO:0000255" key="1">
    <source>
        <dbReference type="HAMAP-Rule" id="MF_00139"/>
    </source>
</evidence>
<evidence type="ECO:0000255" key="2">
    <source>
        <dbReference type="PROSITE-ProRule" id="PRU01202"/>
    </source>
</evidence>
<sequence>MAQTALISVSDKTGILEFAQALHALGIKLLSTGGTAKLLADAGLPVTEVADHTGFPEMLDGRVKTLHPKIHGGLLARRDLPAHVAAIQEHGIDTIDLLVVNLYPFEATVAKAGCTLEDAIENIDIGGPAMVRSAAKNWKDVGVLTDASQYAVALAELQAGGKLSDKTKFAFSVAAFNRIADYDGAISDYLSAIDFDASIGQASPTRSMFPAQSNGRFVKVQDLRYGENPHQQAAFYRDLHPAPGSLVSAKQLQGKELSYNNIADADAAWECVKSFDVPACVIVKHANPCGVAVGKDAAEAYGKAFKTDPTSAFGGIIAFNRPVDGETAQAIAKQFVEVLMAPGYTPEALAVFQATKVKQNVRVLEIALPPGGTTDWDNGRNLMDVKRVGSGLLMQTADNHELAASDLKVVTKKQPTPEQLQDLLFAWKVAKYVKSNAIVFCAGGMTMGVGAGQMSRLDSARIASIKAEHAGLSLKGTAVASDAFFPFRDGLDVVVDAGASCVIQPGGSMRDQEVIDAADERGVVMVLSGVRHFRH</sequence>
<dbReference type="EC" id="2.1.2.3" evidence="1"/>
<dbReference type="EC" id="3.5.4.10" evidence="1"/>
<dbReference type="EMBL" id="CP001635">
    <property type="protein sequence ID" value="ACS21235.1"/>
    <property type="molecule type" value="Genomic_DNA"/>
</dbReference>
<dbReference type="SMR" id="C5CL84"/>
<dbReference type="STRING" id="543728.Vapar_4630"/>
<dbReference type="KEGG" id="vap:Vapar_4630"/>
<dbReference type="eggNOG" id="COG0138">
    <property type="taxonomic scope" value="Bacteria"/>
</dbReference>
<dbReference type="HOGENOM" id="CLU_016316_5_2_4"/>
<dbReference type="OrthoDB" id="9802065at2"/>
<dbReference type="UniPathway" id="UPA00074">
    <property type="reaction ID" value="UER00133"/>
</dbReference>
<dbReference type="UniPathway" id="UPA00074">
    <property type="reaction ID" value="UER00135"/>
</dbReference>
<dbReference type="GO" id="GO:0005829">
    <property type="term" value="C:cytosol"/>
    <property type="evidence" value="ECO:0007669"/>
    <property type="project" value="TreeGrafter"/>
</dbReference>
<dbReference type="GO" id="GO:0003937">
    <property type="term" value="F:IMP cyclohydrolase activity"/>
    <property type="evidence" value="ECO:0007669"/>
    <property type="project" value="UniProtKB-UniRule"/>
</dbReference>
<dbReference type="GO" id="GO:0004643">
    <property type="term" value="F:phosphoribosylaminoimidazolecarboxamide formyltransferase activity"/>
    <property type="evidence" value="ECO:0007669"/>
    <property type="project" value="UniProtKB-UniRule"/>
</dbReference>
<dbReference type="GO" id="GO:0006189">
    <property type="term" value="P:'de novo' IMP biosynthetic process"/>
    <property type="evidence" value="ECO:0007669"/>
    <property type="project" value="UniProtKB-UniRule"/>
</dbReference>
<dbReference type="CDD" id="cd01421">
    <property type="entry name" value="IMPCH"/>
    <property type="match status" value="1"/>
</dbReference>
<dbReference type="FunFam" id="3.40.140.20:FF:000001">
    <property type="entry name" value="Bifunctional purine biosynthesis protein PurH"/>
    <property type="match status" value="1"/>
</dbReference>
<dbReference type="FunFam" id="3.40.140.20:FF:000002">
    <property type="entry name" value="Bifunctional purine biosynthesis protein PurH"/>
    <property type="match status" value="1"/>
</dbReference>
<dbReference type="FunFam" id="3.40.50.1380:FF:000001">
    <property type="entry name" value="Bifunctional purine biosynthesis protein PurH"/>
    <property type="match status" value="1"/>
</dbReference>
<dbReference type="Gene3D" id="3.40.140.20">
    <property type="match status" value="2"/>
</dbReference>
<dbReference type="Gene3D" id="3.40.50.1380">
    <property type="entry name" value="Methylglyoxal synthase-like domain"/>
    <property type="match status" value="1"/>
</dbReference>
<dbReference type="HAMAP" id="MF_00139">
    <property type="entry name" value="PurH"/>
    <property type="match status" value="1"/>
</dbReference>
<dbReference type="InterPro" id="IPR024051">
    <property type="entry name" value="AICAR_Tfase_dup_dom_sf"/>
</dbReference>
<dbReference type="InterPro" id="IPR016193">
    <property type="entry name" value="Cytidine_deaminase-like"/>
</dbReference>
<dbReference type="InterPro" id="IPR011607">
    <property type="entry name" value="MGS-like_dom"/>
</dbReference>
<dbReference type="InterPro" id="IPR036914">
    <property type="entry name" value="MGS-like_dom_sf"/>
</dbReference>
<dbReference type="InterPro" id="IPR002695">
    <property type="entry name" value="PurH-like"/>
</dbReference>
<dbReference type="NCBIfam" id="NF002049">
    <property type="entry name" value="PRK00881.1"/>
    <property type="match status" value="1"/>
</dbReference>
<dbReference type="NCBIfam" id="TIGR00355">
    <property type="entry name" value="purH"/>
    <property type="match status" value="1"/>
</dbReference>
<dbReference type="PANTHER" id="PTHR11692:SF0">
    <property type="entry name" value="BIFUNCTIONAL PURINE BIOSYNTHESIS PROTEIN ATIC"/>
    <property type="match status" value="1"/>
</dbReference>
<dbReference type="PANTHER" id="PTHR11692">
    <property type="entry name" value="BIFUNCTIONAL PURINE BIOSYNTHESIS PROTEIN PURH"/>
    <property type="match status" value="1"/>
</dbReference>
<dbReference type="Pfam" id="PF01808">
    <property type="entry name" value="AICARFT_IMPCHas"/>
    <property type="match status" value="1"/>
</dbReference>
<dbReference type="Pfam" id="PF02142">
    <property type="entry name" value="MGS"/>
    <property type="match status" value="1"/>
</dbReference>
<dbReference type="PIRSF" id="PIRSF000414">
    <property type="entry name" value="AICARFT_IMPCHas"/>
    <property type="match status" value="1"/>
</dbReference>
<dbReference type="SMART" id="SM00798">
    <property type="entry name" value="AICARFT_IMPCHas"/>
    <property type="match status" value="1"/>
</dbReference>
<dbReference type="SMART" id="SM00851">
    <property type="entry name" value="MGS"/>
    <property type="match status" value="1"/>
</dbReference>
<dbReference type="SUPFAM" id="SSF53927">
    <property type="entry name" value="Cytidine deaminase-like"/>
    <property type="match status" value="1"/>
</dbReference>
<dbReference type="SUPFAM" id="SSF52335">
    <property type="entry name" value="Methylglyoxal synthase-like"/>
    <property type="match status" value="1"/>
</dbReference>
<dbReference type="PROSITE" id="PS51855">
    <property type="entry name" value="MGS"/>
    <property type="match status" value="1"/>
</dbReference>
<reference key="1">
    <citation type="journal article" date="2011" name="J. Bacteriol.">
        <title>Complete genome sequence of the metabolically versatile plant growth-promoting endophyte, Variovorax paradoxus S110.</title>
        <authorList>
            <person name="Han J.I."/>
            <person name="Choi H.K."/>
            <person name="Lee S.W."/>
            <person name="Orwin P.M."/>
            <person name="Kim J."/>
            <person name="Laroe S.L."/>
            <person name="Kim T.G."/>
            <person name="O'Neil J."/>
            <person name="Leadbetter J.R."/>
            <person name="Lee S.Y."/>
            <person name="Hur C.G."/>
            <person name="Spain J.C."/>
            <person name="Ovchinnikova G."/>
            <person name="Goodwin L."/>
            <person name="Han C."/>
        </authorList>
    </citation>
    <scope>NUCLEOTIDE SEQUENCE [LARGE SCALE GENOMIC DNA]</scope>
    <source>
        <strain>S110</strain>
    </source>
</reference>
<accession>C5CL84</accession>
<keyword id="KW-0378">Hydrolase</keyword>
<keyword id="KW-0511">Multifunctional enzyme</keyword>
<keyword id="KW-0658">Purine biosynthesis</keyword>
<keyword id="KW-0808">Transferase</keyword>
<proteinExistence type="inferred from homology"/>
<name>PUR9_VARPS</name>